<sequence>MSRLRIYDDTRPESPLLDTQDGAVIAAELQKIGVTFERWQATAPVAPGASQEEVFAAYRADIDRLVAERGFKSVDVASIAPDNPNRAELRKKFLDEHFHKEDEVRFFVAGSGLFTLHVGDKVYEIECVKDDLIAVPDGTTHWFDMGDEPSFVAIRFFTEPDGWVGHFTGTDIAQKFPRYVPTQAS</sequence>
<reference key="1">
    <citation type="journal article" date="2008" name="Genome Biol.">
        <title>The complete genome, comparative and functional analysis of Stenotrophomonas maltophilia reveals an organism heavily shielded by drug resistance determinants.</title>
        <authorList>
            <person name="Crossman L.C."/>
            <person name="Gould V.C."/>
            <person name="Dow J.M."/>
            <person name="Vernikos G.S."/>
            <person name="Okazaki A."/>
            <person name="Sebaihia M."/>
            <person name="Saunders D."/>
            <person name="Arrowsmith C."/>
            <person name="Carver T."/>
            <person name="Peters N."/>
            <person name="Adlem E."/>
            <person name="Kerhornou A."/>
            <person name="Lord A."/>
            <person name="Murphy L."/>
            <person name="Seeger K."/>
            <person name="Squares R."/>
            <person name="Rutter S."/>
            <person name="Quail M.A."/>
            <person name="Rajandream M.A."/>
            <person name="Harris D."/>
            <person name="Churcher C."/>
            <person name="Bentley S.D."/>
            <person name="Parkhill J."/>
            <person name="Thomson N.R."/>
            <person name="Avison M.B."/>
        </authorList>
    </citation>
    <scope>NUCLEOTIDE SEQUENCE [LARGE SCALE GENOMIC DNA]</scope>
    <source>
        <strain>K279a</strain>
    </source>
</reference>
<keyword id="KW-0028">Amino-acid biosynthesis</keyword>
<keyword id="KW-0223">Dioxygenase</keyword>
<keyword id="KW-0408">Iron</keyword>
<keyword id="KW-0479">Metal-binding</keyword>
<keyword id="KW-0486">Methionine biosynthesis</keyword>
<keyword id="KW-0533">Nickel</keyword>
<keyword id="KW-0560">Oxidoreductase</keyword>
<keyword id="KW-1185">Reference proteome</keyword>
<evidence type="ECO:0000255" key="1">
    <source>
        <dbReference type="HAMAP-Rule" id="MF_01682"/>
    </source>
</evidence>
<feature type="chain" id="PRO_0000359232" description="Acireductone dioxygenase">
    <location>
        <begin position="1"/>
        <end position="185"/>
    </location>
</feature>
<feature type="binding site" evidence="1">
    <location>
        <position position="97"/>
    </location>
    <ligand>
        <name>Fe(2+)</name>
        <dbReference type="ChEBI" id="CHEBI:29033"/>
    </ligand>
</feature>
<feature type="binding site" evidence="1">
    <location>
        <position position="97"/>
    </location>
    <ligand>
        <name>Ni(2+)</name>
        <dbReference type="ChEBI" id="CHEBI:49786"/>
    </ligand>
</feature>
<feature type="binding site" evidence="1">
    <location>
        <position position="99"/>
    </location>
    <ligand>
        <name>Fe(2+)</name>
        <dbReference type="ChEBI" id="CHEBI:29033"/>
    </ligand>
</feature>
<feature type="binding site" evidence="1">
    <location>
        <position position="99"/>
    </location>
    <ligand>
        <name>Ni(2+)</name>
        <dbReference type="ChEBI" id="CHEBI:49786"/>
    </ligand>
</feature>
<feature type="binding site" evidence="1">
    <location>
        <position position="103"/>
    </location>
    <ligand>
        <name>Fe(2+)</name>
        <dbReference type="ChEBI" id="CHEBI:29033"/>
    </ligand>
</feature>
<feature type="binding site" evidence="1">
    <location>
        <position position="103"/>
    </location>
    <ligand>
        <name>Ni(2+)</name>
        <dbReference type="ChEBI" id="CHEBI:49786"/>
    </ligand>
</feature>
<feature type="binding site" evidence="1">
    <location>
        <position position="141"/>
    </location>
    <ligand>
        <name>Fe(2+)</name>
        <dbReference type="ChEBI" id="CHEBI:29033"/>
    </ligand>
</feature>
<feature type="binding site" evidence="1">
    <location>
        <position position="141"/>
    </location>
    <ligand>
        <name>Ni(2+)</name>
        <dbReference type="ChEBI" id="CHEBI:49786"/>
    </ligand>
</feature>
<feature type="site" description="May play a role in metal incorporation in vivo" evidence="1">
    <location>
        <position position="96"/>
    </location>
</feature>
<feature type="site" description="May play a role in transmitting local conformational changes" evidence="1">
    <location>
        <position position="102"/>
    </location>
</feature>
<feature type="site" description="Important to generate the dianion" evidence="1">
    <location>
        <position position="105"/>
    </location>
</feature>
<comment type="function">
    <text evidence="1">Catalyzes 2 different reactions between oxygen and the acireductone 1,2-dihydroxy-3-keto-5-methylthiopentene (DHK-MTPene) depending upon the metal bound in the active site. Fe-containing acireductone dioxygenase (Fe-ARD) produces formate and 2-keto-4-methylthiobutyrate (KMTB), the alpha-ketoacid precursor of methionine in the methionine recycle pathway. Ni-containing acireductone dioxygenase (Ni-ARD) produces methylthiopropionate, carbon monoxide and formate, and does not lie on the methionine recycle pathway.</text>
</comment>
<comment type="catalytic activity">
    <reaction evidence="1">
        <text>1,2-dihydroxy-5-(methylsulfanyl)pent-1-en-3-one + O2 = 3-(methylsulfanyl)propanoate + CO + formate + 2 H(+)</text>
        <dbReference type="Rhea" id="RHEA:14161"/>
        <dbReference type="ChEBI" id="CHEBI:15378"/>
        <dbReference type="ChEBI" id="CHEBI:15379"/>
        <dbReference type="ChEBI" id="CHEBI:15740"/>
        <dbReference type="ChEBI" id="CHEBI:17245"/>
        <dbReference type="ChEBI" id="CHEBI:49016"/>
        <dbReference type="ChEBI" id="CHEBI:49252"/>
        <dbReference type="EC" id="1.13.11.53"/>
    </reaction>
</comment>
<comment type="catalytic activity">
    <reaction evidence="1">
        <text>1,2-dihydroxy-5-(methylsulfanyl)pent-1-en-3-one + O2 = 4-methylsulfanyl-2-oxobutanoate + formate + 2 H(+)</text>
        <dbReference type="Rhea" id="RHEA:24504"/>
        <dbReference type="ChEBI" id="CHEBI:15378"/>
        <dbReference type="ChEBI" id="CHEBI:15379"/>
        <dbReference type="ChEBI" id="CHEBI:15740"/>
        <dbReference type="ChEBI" id="CHEBI:16723"/>
        <dbReference type="ChEBI" id="CHEBI:49252"/>
        <dbReference type="EC" id="1.13.11.54"/>
    </reaction>
</comment>
<comment type="cofactor">
    <cofactor evidence="1">
        <name>Fe(2+)</name>
        <dbReference type="ChEBI" id="CHEBI:29033"/>
    </cofactor>
    <text evidence="1">Binds 1 Fe(2+) cation per monomer.</text>
</comment>
<comment type="cofactor">
    <cofactor evidence="1">
        <name>Ni(2+)</name>
        <dbReference type="ChEBI" id="CHEBI:49786"/>
    </cofactor>
    <text evidence="1">Binds 1 nickel ion per monomer.</text>
</comment>
<comment type="pathway">
    <text evidence="1">Amino-acid biosynthesis; L-methionine biosynthesis via salvage pathway; L-methionine from S-methyl-5-thio-alpha-D-ribose 1-phosphate: step 5/6.</text>
</comment>
<comment type="subunit">
    <text evidence="1">Monomer.</text>
</comment>
<comment type="similarity">
    <text evidence="1">Belongs to the acireductone dioxygenase (ARD) family.</text>
</comment>
<proteinExistence type="inferred from homology"/>
<accession>B2FPP3</accession>
<protein>
    <recommendedName>
        <fullName evidence="1">Acireductone dioxygenase</fullName>
    </recommendedName>
    <alternativeName>
        <fullName evidence="1">1,2-dihydroxy-3-keto-5-methylthiopentene dioxygenase</fullName>
        <shortName evidence="1">DHK-MTPene dioxygenase</shortName>
    </alternativeName>
    <alternativeName>
        <fullName evidence="1">Acireductone dioxygenase (Fe(2+)-requiring)</fullName>
        <shortName evidence="1">ARD'</shortName>
        <shortName evidence="1">Fe-ARD</shortName>
        <ecNumber evidence="1">1.13.11.54</ecNumber>
    </alternativeName>
    <alternativeName>
        <fullName evidence="1">Acireductone dioxygenase (Ni(2+)-requiring)</fullName>
        <shortName evidence="1">ARD</shortName>
        <shortName evidence="1">Ni-ARD</shortName>
        <ecNumber evidence="1">1.13.11.53</ecNumber>
    </alternativeName>
</protein>
<organism>
    <name type="scientific">Stenotrophomonas maltophilia (strain K279a)</name>
    <dbReference type="NCBI Taxonomy" id="522373"/>
    <lineage>
        <taxon>Bacteria</taxon>
        <taxon>Pseudomonadati</taxon>
        <taxon>Pseudomonadota</taxon>
        <taxon>Gammaproteobacteria</taxon>
        <taxon>Lysobacterales</taxon>
        <taxon>Lysobacteraceae</taxon>
        <taxon>Stenotrophomonas</taxon>
        <taxon>Stenotrophomonas maltophilia group</taxon>
    </lineage>
</organism>
<gene>
    <name evidence="1" type="primary">mtnD</name>
    <name type="ordered locus">Smlt2188</name>
</gene>
<name>MTND_STRMK</name>
<dbReference type="EC" id="1.13.11.54" evidence="1"/>
<dbReference type="EC" id="1.13.11.53" evidence="1"/>
<dbReference type="EMBL" id="AM743169">
    <property type="protein sequence ID" value="CAQ45686.1"/>
    <property type="molecule type" value="Genomic_DNA"/>
</dbReference>
<dbReference type="RefSeq" id="WP_005409451.1">
    <property type="nucleotide sequence ID" value="NC_010943.1"/>
</dbReference>
<dbReference type="SMR" id="B2FPP3"/>
<dbReference type="EnsemblBacteria" id="CAQ45686">
    <property type="protein sequence ID" value="CAQ45686"/>
    <property type="gene ID" value="Smlt2188"/>
</dbReference>
<dbReference type="KEGG" id="sml:Smlt2188"/>
<dbReference type="eggNOG" id="COG1791">
    <property type="taxonomic scope" value="Bacteria"/>
</dbReference>
<dbReference type="HOGENOM" id="CLU_125400_0_0_6"/>
<dbReference type="UniPathway" id="UPA00904">
    <property type="reaction ID" value="UER00878"/>
</dbReference>
<dbReference type="Proteomes" id="UP000008840">
    <property type="component" value="Chromosome"/>
</dbReference>
<dbReference type="GO" id="GO:0010308">
    <property type="term" value="F:acireductone dioxygenase (Ni2+-requiring) activity"/>
    <property type="evidence" value="ECO:0007669"/>
    <property type="project" value="UniProtKB-UniRule"/>
</dbReference>
<dbReference type="GO" id="GO:0010309">
    <property type="term" value="F:acireductone dioxygenase [iron(II)-requiring] activity"/>
    <property type="evidence" value="ECO:0007669"/>
    <property type="project" value="UniProtKB-UniRule"/>
</dbReference>
<dbReference type="GO" id="GO:0005506">
    <property type="term" value="F:iron ion binding"/>
    <property type="evidence" value="ECO:0007669"/>
    <property type="project" value="UniProtKB-UniRule"/>
</dbReference>
<dbReference type="GO" id="GO:0016151">
    <property type="term" value="F:nickel cation binding"/>
    <property type="evidence" value="ECO:0007669"/>
    <property type="project" value="UniProtKB-UniRule"/>
</dbReference>
<dbReference type="GO" id="GO:0019509">
    <property type="term" value="P:L-methionine salvage from methylthioadenosine"/>
    <property type="evidence" value="ECO:0007669"/>
    <property type="project" value="UniProtKB-UniRule"/>
</dbReference>
<dbReference type="GO" id="GO:0019284">
    <property type="term" value="P:L-methionine salvage from S-adenosylmethionine"/>
    <property type="evidence" value="ECO:0007669"/>
    <property type="project" value="InterPro"/>
</dbReference>
<dbReference type="CDD" id="cd02232">
    <property type="entry name" value="cupin_ARD"/>
    <property type="match status" value="1"/>
</dbReference>
<dbReference type="Gene3D" id="2.60.120.10">
    <property type="entry name" value="Jelly Rolls"/>
    <property type="match status" value="1"/>
</dbReference>
<dbReference type="HAMAP" id="MF_01682">
    <property type="entry name" value="Salvage_MtnD"/>
    <property type="match status" value="1"/>
</dbReference>
<dbReference type="InterPro" id="IPR004313">
    <property type="entry name" value="ARD"/>
</dbReference>
<dbReference type="InterPro" id="IPR023956">
    <property type="entry name" value="ARD_bac"/>
</dbReference>
<dbReference type="InterPro" id="IPR014710">
    <property type="entry name" value="RmlC-like_jellyroll"/>
</dbReference>
<dbReference type="InterPro" id="IPR011051">
    <property type="entry name" value="RmlC_Cupin_sf"/>
</dbReference>
<dbReference type="PANTHER" id="PTHR23418">
    <property type="entry name" value="ACIREDUCTONE DIOXYGENASE"/>
    <property type="match status" value="1"/>
</dbReference>
<dbReference type="PANTHER" id="PTHR23418:SF0">
    <property type="entry name" value="ACIREDUCTONE DIOXYGENASE"/>
    <property type="match status" value="1"/>
</dbReference>
<dbReference type="Pfam" id="PF03079">
    <property type="entry name" value="ARD"/>
    <property type="match status" value="1"/>
</dbReference>
<dbReference type="SUPFAM" id="SSF51182">
    <property type="entry name" value="RmlC-like cupins"/>
    <property type="match status" value="1"/>
</dbReference>